<accession>Q3JMS6</accession>
<organism>
    <name type="scientific">Burkholderia pseudomallei (strain 1710b)</name>
    <dbReference type="NCBI Taxonomy" id="320372"/>
    <lineage>
        <taxon>Bacteria</taxon>
        <taxon>Pseudomonadati</taxon>
        <taxon>Pseudomonadota</taxon>
        <taxon>Betaproteobacteria</taxon>
        <taxon>Burkholderiales</taxon>
        <taxon>Burkholderiaceae</taxon>
        <taxon>Burkholderia</taxon>
        <taxon>pseudomallei group</taxon>
    </lineage>
</organism>
<proteinExistence type="inferred from homology"/>
<name>RS14_BURP1</name>
<protein>
    <recommendedName>
        <fullName evidence="1">Small ribosomal subunit protein uS14</fullName>
    </recommendedName>
    <alternativeName>
        <fullName evidence="2">30S ribosomal protein S14</fullName>
    </alternativeName>
</protein>
<evidence type="ECO:0000255" key="1">
    <source>
        <dbReference type="HAMAP-Rule" id="MF_00537"/>
    </source>
</evidence>
<evidence type="ECO:0000305" key="2"/>
<gene>
    <name evidence="1" type="primary">rpsN</name>
    <name type="ordered locus">BURPS1710b_3763</name>
</gene>
<comment type="function">
    <text evidence="1">Binds 16S rRNA, required for the assembly of 30S particles and may also be responsible for determining the conformation of the 16S rRNA at the A site.</text>
</comment>
<comment type="subunit">
    <text evidence="1">Part of the 30S ribosomal subunit. Contacts proteins S3 and S10.</text>
</comment>
<comment type="similarity">
    <text evidence="1">Belongs to the universal ribosomal protein uS14 family.</text>
</comment>
<dbReference type="EMBL" id="CP000124">
    <property type="protein sequence ID" value="ABA48175.1"/>
    <property type="molecule type" value="Genomic_DNA"/>
</dbReference>
<dbReference type="RefSeq" id="WP_004197948.1">
    <property type="nucleotide sequence ID" value="NC_007434.1"/>
</dbReference>
<dbReference type="SMR" id="Q3JMS6"/>
<dbReference type="EnsemblBacteria" id="ABA48175">
    <property type="protein sequence ID" value="ABA48175"/>
    <property type="gene ID" value="BURPS1710b_3763"/>
</dbReference>
<dbReference type="GeneID" id="93061819"/>
<dbReference type="KEGG" id="bpm:BURPS1710b_3763"/>
<dbReference type="HOGENOM" id="CLU_139869_0_1_4"/>
<dbReference type="Proteomes" id="UP000002700">
    <property type="component" value="Chromosome I"/>
</dbReference>
<dbReference type="GO" id="GO:0005737">
    <property type="term" value="C:cytoplasm"/>
    <property type="evidence" value="ECO:0007669"/>
    <property type="project" value="UniProtKB-ARBA"/>
</dbReference>
<dbReference type="GO" id="GO:0015935">
    <property type="term" value="C:small ribosomal subunit"/>
    <property type="evidence" value="ECO:0007669"/>
    <property type="project" value="TreeGrafter"/>
</dbReference>
<dbReference type="GO" id="GO:0019843">
    <property type="term" value="F:rRNA binding"/>
    <property type="evidence" value="ECO:0007669"/>
    <property type="project" value="UniProtKB-UniRule"/>
</dbReference>
<dbReference type="GO" id="GO:0003735">
    <property type="term" value="F:structural constituent of ribosome"/>
    <property type="evidence" value="ECO:0007669"/>
    <property type="project" value="InterPro"/>
</dbReference>
<dbReference type="GO" id="GO:0006412">
    <property type="term" value="P:translation"/>
    <property type="evidence" value="ECO:0007669"/>
    <property type="project" value="UniProtKB-UniRule"/>
</dbReference>
<dbReference type="FunFam" id="1.10.287.1480:FF:000001">
    <property type="entry name" value="30S ribosomal protein S14"/>
    <property type="match status" value="1"/>
</dbReference>
<dbReference type="Gene3D" id="1.10.287.1480">
    <property type="match status" value="1"/>
</dbReference>
<dbReference type="HAMAP" id="MF_00537">
    <property type="entry name" value="Ribosomal_uS14_1"/>
    <property type="match status" value="1"/>
</dbReference>
<dbReference type="InterPro" id="IPR001209">
    <property type="entry name" value="Ribosomal_uS14"/>
</dbReference>
<dbReference type="InterPro" id="IPR023036">
    <property type="entry name" value="Ribosomal_uS14_bac/plastid"/>
</dbReference>
<dbReference type="NCBIfam" id="NF006477">
    <property type="entry name" value="PRK08881.1"/>
    <property type="match status" value="1"/>
</dbReference>
<dbReference type="PANTHER" id="PTHR19836">
    <property type="entry name" value="30S RIBOSOMAL PROTEIN S14"/>
    <property type="match status" value="1"/>
</dbReference>
<dbReference type="PANTHER" id="PTHR19836:SF19">
    <property type="entry name" value="SMALL RIBOSOMAL SUBUNIT PROTEIN US14M"/>
    <property type="match status" value="1"/>
</dbReference>
<dbReference type="Pfam" id="PF00253">
    <property type="entry name" value="Ribosomal_S14"/>
    <property type="match status" value="1"/>
</dbReference>
<dbReference type="SUPFAM" id="SSF57716">
    <property type="entry name" value="Glucocorticoid receptor-like (DNA-binding domain)"/>
    <property type="match status" value="1"/>
</dbReference>
<reference key="1">
    <citation type="journal article" date="2010" name="Genome Biol. Evol.">
        <title>Continuing evolution of Burkholderia mallei through genome reduction and large-scale rearrangements.</title>
        <authorList>
            <person name="Losada L."/>
            <person name="Ronning C.M."/>
            <person name="DeShazer D."/>
            <person name="Woods D."/>
            <person name="Fedorova N."/>
            <person name="Kim H.S."/>
            <person name="Shabalina S.A."/>
            <person name="Pearson T.R."/>
            <person name="Brinkac L."/>
            <person name="Tan P."/>
            <person name="Nandi T."/>
            <person name="Crabtree J."/>
            <person name="Badger J."/>
            <person name="Beckstrom-Sternberg S."/>
            <person name="Saqib M."/>
            <person name="Schutzer S.E."/>
            <person name="Keim P."/>
            <person name="Nierman W.C."/>
        </authorList>
    </citation>
    <scope>NUCLEOTIDE SEQUENCE [LARGE SCALE GENOMIC DNA]</scope>
    <source>
        <strain>1710b</strain>
    </source>
</reference>
<keyword id="KW-0687">Ribonucleoprotein</keyword>
<keyword id="KW-0689">Ribosomal protein</keyword>
<keyword id="KW-0694">RNA-binding</keyword>
<keyword id="KW-0699">rRNA-binding</keyword>
<sequence length="101" mass="11648">MAKLALIEREKKRARLAQKYAPKRAELKAIIDDASKSDEERYAARLELQQLPRNANPTRKRNRCAITGRPRGTFRKFGLARNKIREIAFRGEIPGLTKASW</sequence>
<feature type="chain" id="PRO_1000128338" description="Small ribosomal subunit protein uS14">
    <location>
        <begin position="1"/>
        <end position="101"/>
    </location>
</feature>